<protein>
    <recommendedName>
        <fullName evidence="1">Polyribonucleotide nucleotidyltransferase</fullName>
        <ecNumber evidence="1">2.7.7.8</ecNumber>
    </recommendedName>
    <alternativeName>
        <fullName evidence="1">Polynucleotide phosphorylase</fullName>
        <shortName evidence="1">PNPase</shortName>
    </alternativeName>
</protein>
<sequence>MNPIVKQFKYGQHTVTLETGAIARQATAAVMASMDDTTVFVSVVAKKEVKEGQDFFPLTVDYQERSYAAGKIPGGFFKREGRPSEGETLIARLIDRPIRPLFPEGFLNEIQIIATVVSVNPQISPDLVAMIGASAALALSGVPFNGPIGAARVGFINDQFVLNPTMAEQKQSRLDLVVAGTDKAVLMVESEADILTEEQMLAAVVFGHQQQQVVIEAIKELVKEAGKPRWDWVAPEPDTALINQVKVIAESRLGDAYRITEKQVRYEQIDAIKADVIAQITAENEEVSEGKIVDIFTALESQIVRGRIIAGEPRIDGRTVDTVRALDICTGVLPRTHGSAIFTRGETQALAVVTLGTERDAQILDELTGERQDTFLFHYNFPPYSVGETGRVGSPKRREIGHGRLAKRGVAAVMPSISEFPYVVRVVSEITESNGSSSMASVCGASLALMDAGVPVKSAVAGIAMGLVKEEDKFVVLSDILGDEDHLGDMDFKVAGTRTGVTALQMDIKIEGITPEIMQIALNQAKSARMHILGVMEQAIAAPRAEISEYAPRIYTMKIDPKKIKDVIGKGGATIRTLTEETGTSIDIDDDGTVKIAAIDGNAVKEVMARIEEITAEVEAGAVYTGKVTRLADFGAFVAILGNKEGLVHISQIAEERVEKVSDYLQVGQDVQVKVVEIDRQGRIRLTMKDIVSKAENADAQTDIVEE</sequence>
<comment type="function">
    <text evidence="1">Involved in mRNA degradation. Catalyzes the phosphorolysis of single-stranded polyribonucleotides processively in the 3'- to 5'-direction.</text>
</comment>
<comment type="catalytic activity">
    <reaction evidence="1">
        <text>RNA(n+1) + phosphate = RNA(n) + a ribonucleoside 5'-diphosphate</text>
        <dbReference type="Rhea" id="RHEA:22096"/>
        <dbReference type="Rhea" id="RHEA-COMP:14527"/>
        <dbReference type="Rhea" id="RHEA-COMP:17342"/>
        <dbReference type="ChEBI" id="CHEBI:43474"/>
        <dbReference type="ChEBI" id="CHEBI:57930"/>
        <dbReference type="ChEBI" id="CHEBI:140395"/>
        <dbReference type="EC" id="2.7.7.8"/>
    </reaction>
</comment>
<comment type="cofactor">
    <cofactor evidence="1">
        <name>Mg(2+)</name>
        <dbReference type="ChEBI" id="CHEBI:18420"/>
    </cofactor>
</comment>
<comment type="subunit">
    <text evidence="1">Component of the RNA degradosome, which is a multiprotein complex involved in RNA processing and mRNA degradation.</text>
</comment>
<comment type="subcellular location">
    <subcellularLocation>
        <location evidence="1">Cytoplasm</location>
    </subcellularLocation>
</comment>
<comment type="similarity">
    <text evidence="1">Belongs to the polyribonucleotide nucleotidyltransferase family.</text>
</comment>
<name>PNP_ACTSZ</name>
<feature type="chain" id="PRO_0000329485" description="Polyribonucleotide nucleotidyltransferase">
    <location>
        <begin position="1"/>
        <end position="707"/>
    </location>
</feature>
<feature type="domain" description="KH" evidence="1">
    <location>
        <begin position="552"/>
        <end position="611"/>
    </location>
</feature>
<feature type="domain" description="S1 motif" evidence="1">
    <location>
        <begin position="621"/>
        <end position="689"/>
    </location>
</feature>
<feature type="binding site" evidence="1">
    <location>
        <position position="485"/>
    </location>
    <ligand>
        <name>Mg(2+)</name>
        <dbReference type="ChEBI" id="CHEBI:18420"/>
    </ligand>
</feature>
<feature type="binding site" evidence="1">
    <location>
        <position position="491"/>
    </location>
    <ligand>
        <name>Mg(2+)</name>
        <dbReference type="ChEBI" id="CHEBI:18420"/>
    </ligand>
</feature>
<keyword id="KW-0963">Cytoplasm</keyword>
<keyword id="KW-0460">Magnesium</keyword>
<keyword id="KW-0479">Metal-binding</keyword>
<keyword id="KW-0548">Nucleotidyltransferase</keyword>
<keyword id="KW-1185">Reference proteome</keyword>
<keyword id="KW-0694">RNA-binding</keyword>
<keyword id="KW-0808">Transferase</keyword>
<reference key="1">
    <citation type="journal article" date="2010" name="BMC Genomics">
        <title>A genomic perspective on the potential of Actinobacillus succinogenes for industrial succinate production.</title>
        <authorList>
            <person name="McKinlay J.B."/>
            <person name="Laivenieks M."/>
            <person name="Schindler B.D."/>
            <person name="McKinlay A.A."/>
            <person name="Siddaramappa S."/>
            <person name="Challacombe J.F."/>
            <person name="Lowry S.R."/>
            <person name="Clum A."/>
            <person name="Lapidus A.L."/>
            <person name="Burkhart K.B."/>
            <person name="Harkins V."/>
            <person name="Vieille C."/>
        </authorList>
    </citation>
    <scope>NUCLEOTIDE SEQUENCE [LARGE SCALE GENOMIC DNA]</scope>
    <source>
        <strain>ATCC 55618 / DSM 22257 / CCUG 43843 / 130Z</strain>
    </source>
</reference>
<proteinExistence type="inferred from homology"/>
<evidence type="ECO:0000255" key="1">
    <source>
        <dbReference type="HAMAP-Rule" id="MF_01595"/>
    </source>
</evidence>
<accession>A6VR10</accession>
<organism>
    <name type="scientific">Actinobacillus succinogenes (strain ATCC 55618 / DSM 22257 / CCUG 43843 / 130Z)</name>
    <dbReference type="NCBI Taxonomy" id="339671"/>
    <lineage>
        <taxon>Bacteria</taxon>
        <taxon>Pseudomonadati</taxon>
        <taxon>Pseudomonadota</taxon>
        <taxon>Gammaproteobacteria</taxon>
        <taxon>Pasteurellales</taxon>
        <taxon>Pasteurellaceae</taxon>
        <taxon>Actinobacillus</taxon>
    </lineage>
</organism>
<gene>
    <name evidence="1" type="primary">pnp</name>
    <name type="ordered locus">Asuc_2061</name>
</gene>
<dbReference type="EC" id="2.7.7.8" evidence="1"/>
<dbReference type="EMBL" id="CP000746">
    <property type="protein sequence ID" value="ABR75407.1"/>
    <property type="molecule type" value="Genomic_DNA"/>
</dbReference>
<dbReference type="RefSeq" id="WP_012073783.1">
    <property type="nucleotide sequence ID" value="NC_009655.1"/>
</dbReference>
<dbReference type="SMR" id="A6VR10"/>
<dbReference type="STRING" id="339671.Asuc_2061"/>
<dbReference type="KEGG" id="asu:Asuc_2061"/>
<dbReference type="eggNOG" id="COG1185">
    <property type="taxonomic scope" value="Bacteria"/>
</dbReference>
<dbReference type="HOGENOM" id="CLU_004217_2_2_6"/>
<dbReference type="OrthoDB" id="9804305at2"/>
<dbReference type="Proteomes" id="UP000001114">
    <property type="component" value="Chromosome"/>
</dbReference>
<dbReference type="GO" id="GO:0005829">
    <property type="term" value="C:cytosol"/>
    <property type="evidence" value="ECO:0007669"/>
    <property type="project" value="TreeGrafter"/>
</dbReference>
<dbReference type="GO" id="GO:0000175">
    <property type="term" value="F:3'-5'-RNA exonuclease activity"/>
    <property type="evidence" value="ECO:0007669"/>
    <property type="project" value="TreeGrafter"/>
</dbReference>
<dbReference type="GO" id="GO:0000287">
    <property type="term" value="F:magnesium ion binding"/>
    <property type="evidence" value="ECO:0007669"/>
    <property type="project" value="UniProtKB-UniRule"/>
</dbReference>
<dbReference type="GO" id="GO:0004654">
    <property type="term" value="F:polyribonucleotide nucleotidyltransferase activity"/>
    <property type="evidence" value="ECO:0007669"/>
    <property type="project" value="UniProtKB-UniRule"/>
</dbReference>
<dbReference type="GO" id="GO:0003723">
    <property type="term" value="F:RNA binding"/>
    <property type="evidence" value="ECO:0007669"/>
    <property type="project" value="UniProtKB-UniRule"/>
</dbReference>
<dbReference type="GO" id="GO:0006402">
    <property type="term" value="P:mRNA catabolic process"/>
    <property type="evidence" value="ECO:0007669"/>
    <property type="project" value="UniProtKB-UniRule"/>
</dbReference>
<dbReference type="GO" id="GO:0006396">
    <property type="term" value="P:RNA processing"/>
    <property type="evidence" value="ECO:0007669"/>
    <property type="project" value="InterPro"/>
</dbReference>
<dbReference type="CDD" id="cd02393">
    <property type="entry name" value="KH-I_PNPase"/>
    <property type="match status" value="1"/>
</dbReference>
<dbReference type="CDD" id="cd11363">
    <property type="entry name" value="RNase_PH_PNPase_1"/>
    <property type="match status" value="1"/>
</dbReference>
<dbReference type="CDD" id="cd11364">
    <property type="entry name" value="RNase_PH_PNPase_2"/>
    <property type="match status" value="1"/>
</dbReference>
<dbReference type="CDD" id="cd04472">
    <property type="entry name" value="S1_PNPase"/>
    <property type="match status" value="1"/>
</dbReference>
<dbReference type="FunFam" id="2.40.50.140:FF:000023">
    <property type="entry name" value="Polyribonucleotide nucleotidyltransferase"/>
    <property type="match status" value="1"/>
</dbReference>
<dbReference type="FunFam" id="3.30.1370.10:FF:000001">
    <property type="entry name" value="Polyribonucleotide nucleotidyltransferase"/>
    <property type="match status" value="1"/>
</dbReference>
<dbReference type="FunFam" id="3.30.230.70:FF:000001">
    <property type="entry name" value="Polyribonucleotide nucleotidyltransferase"/>
    <property type="match status" value="1"/>
</dbReference>
<dbReference type="FunFam" id="3.30.230.70:FF:000002">
    <property type="entry name" value="Polyribonucleotide nucleotidyltransferase"/>
    <property type="match status" value="1"/>
</dbReference>
<dbReference type="Gene3D" id="3.30.230.70">
    <property type="entry name" value="GHMP Kinase, N-terminal domain"/>
    <property type="match status" value="2"/>
</dbReference>
<dbReference type="Gene3D" id="3.30.1370.10">
    <property type="entry name" value="K Homology domain, type 1"/>
    <property type="match status" value="1"/>
</dbReference>
<dbReference type="Gene3D" id="2.40.50.140">
    <property type="entry name" value="Nucleic acid-binding proteins"/>
    <property type="match status" value="1"/>
</dbReference>
<dbReference type="HAMAP" id="MF_01595">
    <property type="entry name" value="PNPase"/>
    <property type="match status" value="1"/>
</dbReference>
<dbReference type="InterPro" id="IPR001247">
    <property type="entry name" value="ExoRNase_PH_dom1"/>
</dbReference>
<dbReference type="InterPro" id="IPR015847">
    <property type="entry name" value="ExoRNase_PH_dom2"/>
</dbReference>
<dbReference type="InterPro" id="IPR036345">
    <property type="entry name" value="ExoRNase_PH_dom2_sf"/>
</dbReference>
<dbReference type="InterPro" id="IPR004087">
    <property type="entry name" value="KH_dom"/>
</dbReference>
<dbReference type="InterPro" id="IPR004088">
    <property type="entry name" value="KH_dom_type_1"/>
</dbReference>
<dbReference type="InterPro" id="IPR036612">
    <property type="entry name" value="KH_dom_type_1_sf"/>
</dbReference>
<dbReference type="InterPro" id="IPR012340">
    <property type="entry name" value="NA-bd_OB-fold"/>
</dbReference>
<dbReference type="InterPro" id="IPR012162">
    <property type="entry name" value="PNPase"/>
</dbReference>
<dbReference type="InterPro" id="IPR027408">
    <property type="entry name" value="PNPase/RNase_PH_dom_sf"/>
</dbReference>
<dbReference type="InterPro" id="IPR015848">
    <property type="entry name" value="PNPase_PH_RNA-bd_bac/org-type"/>
</dbReference>
<dbReference type="InterPro" id="IPR036456">
    <property type="entry name" value="PNPase_PH_RNA-bd_sf"/>
</dbReference>
<dbReference type="InterPro" id="IPR020568">
    <property type="entry name" value="Ribosomal_Su5_D2-typ_SF"/>
</dbReference>
<dbReference type="InterPro" id="IPR003029">
    <property type="entry name" value="S1_domain"/>
</dbReference>
<dbReference type="NCBIfam" id="TIGR03591">
    <property type="entry name" value="polynuc_phos"/>
    <property type="match status" value="1"/>
</dbReference>
<dbReference type="NCBIfam" id="NF008805">
    <property type="entry name" value="PRK11824.1"/>
    <property type="match status" value="1"/>
</dbReference>
<dbReference type="PANTHER" id="PTHR11252">
    <property type="entry name" value="POLYRIBONUCLEOTIDE NUCLEOTIDYLTRANSFERASE"/>
    <property type="match status" value="1"/>
</dbReference>
<dbReference type="PANTHER" id="PTHR11252:SF0">
    <property type="entry name" value="POLYRIBONUCLEOTIDE NUCLEOTIDYLTRANSFERASE 1, MITOCHONDRIAL"/>
    <property type="match status" value="1"/>
</dbReference>
<dbReference type="Pfam" id="PF00013">
    <property type="entry name" value="KH_1"/>
    <property type="match status" value="1"/>
</dbReference>
<dbReference type="Pfam" id="PF03726">
    <property type="entry name" value="PNPase"/>
    <property type="match status" value="1"/>
</dbReference>
<dbReference type="Pfam" id="PF01138">
    <property type="entry name" value="RNase_PH"/>
    <property type="match status" value="2"/>
</dbReference>
<dbReference type="Pfam" id="PF03725">
    <property type="entry name" value="RNase_PH_C"/>
    <property type="match status" value="2"/>
</dbReference>
<dbReference type="Pfam" id="PF00575">
    <property type="entry name" value="S1"/>
    <property type="match status" value="1"/>
</dbReference>
<dbReference type="PIRSF" id="PIRSF005499">
    <property type="entry name" value="PNPase"/>
    <property type="match status" value="1"/>
</dbReference>
<dbReference type="SMART" id="SM00322">
    <property type="entry name" value="KH"/>
    <property type="match status" value="1"/>
</dbReference>
<dbReference type="SMART" id="SM00316">
    <property type="entry name" value="S1"/>
    <property type="match status" value="1"/>
</dbReference>
<dbReference type="SUPFAM" id="SSF54791">
    <property type="entry name" value="Eukaryotic type KH-domain (KH-domain type I)"/>
    <property type="match status" value="1"/>
</dbReference>
<dbReference type="SUPFAM" id="SSF50249">
    <property type="entry name" value="Nucleic acid-binding proteins"/>
    <property type="match status" value="1"/>
</dbReference>
<dbReference type="SUPFAM" id="SSF46915">
    <property type="entry name" value="Polynucleotide phosphorylase/guanosine pentaphosphate synthase (PNPase/GPSI), domain 3"/>
    <property type="match status" value="1"/>
</dbReference>
<dbReference type="SUPFAM" id="SSF55666">
    <property type="entry name" value="Ribonuclease PH domain 2-like"/>
    <property type="match status" value="2"/>
</dbReference>
<dbReference type="SUPFAM" id="SSF54211">
    <property type="entry name" value="Ribosomal protein S5 domain 2-like"/>
    <property type="match status" value="2"/>
</dbReference>
<dbReference type="PROSITE" id="PS50084">
    <property type="entry name" value="KH_TYPE_1"/>
    <property type="match status" value="1"/>
</dbReference>
<dbReference type="PROSITE" id="PS50126">
    <property type="entry name" value="S1"/>
    <property type="match status" value="1"/>
</dbReference>